<organism>
    <name type="scientific">Arabidopsis thaliana</name>
    <name type="common">Mouse-ear cress</name>
    <dbReference type="NCBI Taxonomy" id="3702"/>
    <lineage>
        <taxon>Eukaryota</taxon>
        <taxon>Viridiplantae</taxon>
        <taxon>Streptophyta</taxon>
        <taxon>Embryophyta</taxon>
        <taxon>Tracheophyta</taxon>
        <taxon>Spermatophyta</taxon>
        <taxon>Magnoliopsida</taxon>
        <taxon>eudicotyledons</taxon>
        <taxon>Gunneridae</taxon>
        <taxon>Pentapetalae</taxon>
        <taxon>rosids</taxon>
        <taxon>malvids</taxon>
        <taxon>Brassicales</taxon>
        <taxon>Brassicaceae</taxon>
        <taxon>Camelineae</taxon>
        <taxon>Arabidopsis</taxon>
    </lineage>
</organism>
<gene>
    <name type="ordered locus">At4g10190</name>
    <name type="ORF">F28M11.110</name>
    <name type="ORF">T9A4.12</name>
</gene>
<reference key="1">
    <citation type="journal article" date="1999" name="Nature">
        <title>Sequence and analysis of chromosome 4 of the plant Arabidopsis thaliana.</title>
        <authorList>
            <person name="Mayer K.F.X."/>
            <person name="Schueller C."/>
            <person name="Wambutt R."/>
            <person name="Murphy G."/>
            <person name="Volckaert G."/>
            <person name="Pohl T."/>
            <person name="Duesterhoeft A."/>
            <person name="Stiekema W."/>
            <person name="Entian K.-D."/>
            <person name="Terryn N."/>
            <person name="Harris B."/>
            <person name="Ansorge W."/>
            <person name="Brandt P."/>
            <person name="Grivell L.A."/>
            <person name="Rieger M."/>
            <person name="Weichselgartner M."/>
            <person name="de Simone V."/>
            <person name="Obermaier B."/>
            <person name="Mache R."/>
            <person name="Mueller M."/>
            <person name="Kreis M."/>
            <person name="Delseny M."/>
            <person name="Puigdomenech P."/>
            <person name="Watson M."/>
            <person name="Schmidtheini T."/>
            <person name="Reichert B."/>
            <person name="Portetelle D."/>
            <person name="Perez-Alonso M."/>
            <person name="Boutry M."/>
            <person name="Bancroft I."/>
            <person name="Vos P."/>
            <person name="Hoheisel J."/>
            <person name="Zimmermann W."/>
            <person name="Wedler H."/>
            <person name="Ridley P."/>
            <person name="Langham S.-A."/>
            <person name="McCullagh B."/>
            <person name="Bilham L."/>
            <person name="Robben J."/>
            <person name="van der Schueren J."/>
            <person name="Grymonprez B."/>
            <person name="Chuang Y.-J."/>
            <person name="Vandenbussche F."/>
            <person name="Braeken M."/>
            <person name="Weltjens I."/>
            <person name="Voet M."/>
            <person name="Bastiaens I."/>
            <person name="Aert R."/>
            <person name="Defoor E."/>
            <person name="Weitzenegger T."/>
            <person name="Bothe G."/>
            <person name="Ramsperger U."/>
            <person name="Hilbert H."/>
            <person name="Braun M."/>
            <person name="Holzer E."/>
            <person name="Brandt A."/>
            <person name="Peters S."/>
            <person name="van Staveren M."/>
            <person name="Dirkse W."/>
            <person name="Mooijman P."/>
            <person name="Klein Lankhorst R."/>
            <person name="Rose M."/>
            <person name="Hauf J."/>
            <person name="Koetter P."/>
            <person name="Berneiser S."/>
            <person name="Hempel S."/>
            <person name="Feldpausch M."/>
            <person name="Lamberth S."/>
            <person name="Van den Daele H."/>
            <person name="De Keyser A."/>
            <person name="Buysshaert C."/>
            <person name="Gielen J."/>
            <person name="Villarroel R."/>
            <person name="De Clercq R."/>
            <person name="van Montagu M."/>
            <person name="Rogers J."/>
            <person name="Cronin A."/>
            <person name="Quail M.A."/>
            <person name="Bray-Allen S."/>
            <person name="Clark L."/>
            <person name="Doggett J."/>
            <person name="Hall S."/>
            <person name="Kay M."/>
            <person name="Lennard N."/>
            <person name="McLay K."/>
            <person name="Mayes R."/>
            <person name="Pettett A."/>
            <person name="Rajandream M.A."/>
            <person name="Lyne M."/>
            <person name="Benes V."/>
            <person name="Rechmann S."/>
            <person name="Borkova D."/>
            <person name="Bloecker H."/>
            <person name="Scharfe M."/>
            <person name="Grimm M."/>
            <person name="Loehnert T.-H."/>
            <person name="Dose S."/>
            <person name="de Haan M."/>
            <person name="Maarse A.C."/>
            <person name="Schaefer M."/>
            <person name="Mueller-Auer S."/>
            <person name="Gabel C."/>
            <person name="Fuchs M."/>
            <person name="Fartmann B."/>
            <person name="Granderath K."/>
            <person name="Dauner D."/>
            <person name="Herzl A."/>
            <person name="Neumann S."/>
            <person name="Argiriou A."/>
            <person name="Vitale D."/>
            <person name="Liguori R."/>
            <person name="Piravandi E."/>
            <person name="Massenet O."/>
            <person name="Quigley F."/>
            <person name="Clabauld G."/>
            <person name="Muendlein A."/>
            <person name="Felber R."/>
            <person name="Schnabl S."/>
            <person name="Hiller R."/>
            <person name="Schmidt W."/>
            <person name="Lecharny A."/>
            <person name="Aubourg S."/>
            <person name="Chefdor F."/>
            <person name="Cooke R."/>
            <person name="Berger C."/>
            <person name="Monfort A."/>
            <person name="Casacuberta E."/>
            <person name="Gibbons T."/>
            <person name="Weber N."/>
            <person name="Vandenbol M."/>
            <person name="Bargues M."/>
            <person name="Terol J."/>
            <person name="Torres A."/>
            <person name="Perez-Perez A."/>
            <person name="Purnelle B."/>
            <person name="Bent E."/>
            <person name="Johnson S."/>
            <person name="Tacon D."/>
            <person name="Jesse T."/>
            <person name="Heijnen L."/>
            <person name="Schwarz S."/>
            <person name="Scholler P."/>
            <person name="Heber S."/>
            <person name="Francs P."/>
            <person name="Bielke C."/>
            <person name="Frishman D."/>
            <person name="Haase D."/>
            <person name="Lemcke K."/>
            <person name="Mewes H.-W."/>
            <person name="Stocker S."/>
            <person name="Zaccaria P."/>
            <person name="Bevan M."/>
            <person name="Wilson R.K."/>
            <person name="de la Bastide M."/>
            <person name="Habermann K."/>
            <person name="Parnell L."/>
            <person name="Dedhia N."/>
            <person name="Gnoj L."/>
            <person name="Schutz K."/>
            <person name="Huang E."/>
            <person name="Spiegel L."/>
            <person name="Sekhon M."/>
            <person name="Murray J."/>
            <person name="Sheet P."/>
            <person name="Cordes M."/>
            <person name="Abu-Threideh J."/>
            <person name="Stoneking T."/>
            <person name="Kalicki J."/>
            <person name="Graves T."/>
            <person name="Harmon G."/>
            <person name="Edwards J."/>
            <person name="Latreille P."/>
            <person name="Courtney L."/>
            <person name="Cloud J."/>
            <person name="Abbott A."/>
            <person name="Scott K."/>
            <person name="Johnson D."/>
            <person name="Minx P."/>
            <person name="Bentley D."/>
            <person name="Fulton B."/>
            <person name="Miller N."/>
            <person name="Greco T."/>
            <person name="Kemp K."/>
            <person name="Kramer J."/>
            <person name="Fulton L."/>
            <person name="Mardis E."/>
            <person name="Dante M."/>
            <person name="Pepin K."/>
            <person name="Hillier L.W."/>
            <person name="Nelson J."/>
            <person name="Spieth J."/>
            <person name="Ryan E."/>
            <person name="Andrews S."/>
            <person name="Geisel C."/>
            <person name="Layman D."/>
            <person name="Du H."/>
            <person name="Ali J."/>
            <person name="Berghoff A."/>
            <person name="Jones K."/>
            <person name="Drone K."/>
            <person name="Cotton M."/>
            <person name="Joshu C."/>
            <person name="Antonoiu B."/>
            <person name="Zidanic M."/>
            <person name="Strong C."/>
            <person name="Sun H."/>
            <person name="Lamar B."/>
            <person name="Yordan C."/>
            <person name="Ma P."/>
            <person name="Zhong J."/>
            <person name="Preston R."/>
            <person name="Vil D."/>
            <person name="Shekher M."/>
            <person name="Matero A."/>
            <person name="Shah R."/>
            <person name="Swaby I.K."/>
            <person name="O'Shaughnessy A."/>
            <person name="Rodriguez M."/>
            <person name="Hoffman J."/>
            <person name="Till S."/>
            <person name="Granat S."/>
            <person name="Shohdy N."/>
            <person name="Hasegawa A."/>
            <person name="Hameed A."/>
            <person name="Lodhi M."/>
            <person name="Johnson A."/>
            <person name="Chen E."/>
            <person name="Marra M.A."/>
            <person name="Martienssen R."/>
            <person name="McCombie W.R."/>
        </authorList>
    </citation>
    <scope>NUCLEOTIDE SEQUENCE [LARGE SCALE GENOMIC DNA]</scope>
    <source>
        <strain>cv. Columbia</strain>
    </source>
</reference>
<reference key="2">
    <citation type="journal article" date="2017" name="Plant J.">
        <title>Araport11: a complete reannotation of the Arabidopsis thaliana reference genome.</title>
        <authorList>
            <person name="Cheng C.Y."/>
            <person name="Krishnakumar V."/>
            <person name="Chan A.P."/>
            <person name="Thibaud-Nissen F."/>
            <person name="Schobel S."/>
            <person name="Town C.D."/>
        </authorList>
    </citation>
    <scope>GENOME REANNOTATION</scope>
    <source>
        <strain>cv. Columbia</strain>
    </source>
</reference>
<sequence>MTKRNIVDLPEDLVMEILARVPTVTLVRLQSTSKRWNVLIEDKRFAEQHFTNAPRHSLLIMLMTFRVYLVSVDLHTIHNNKVNIISQLRLKDPLSNFLEEVDICNVFHCDGFLLCTTVDNRLVVSNPCSRDTKWIQPRNFYKKFDIFALGKSSCNKYKIMRMDQFYPDRPEFMNYEIYDFNSNSWRVVGKITDWFIPRCMDRGMSVNGNTYWLASTNKDLTSSSFLLGFDFSTERFVRVSLPGDHLSDPVFALAVTREDPKICVAIIQELHIDVWIATTIESTGAASWSKFLSVELANLYERICLDSWMNFLVDQKNKVLVYRDGNYWISNVFLHVVGEDKCIQVDHHDSVSRCSLVVNYVPTLVHI</sequence>
<accession>O82622</accession>
<protein>
    <recommendedName>
        <fullName>Putative F-box protein At4g10190</fullName>
    </recommendedName>
</protein>
<evidence type="ECO:0000255" key="1">
    <source>
        <dbReference type="PROSITE-ProRule" id="PRU00080"/>
    </source>
</evidence>
<evidence type="ECO:0000305" key="2"/>
<dbReference type="EMBL" id="AF096373">
    <property type="protein sequence ID" value="AAC62811.1"/>
    <property type="status" value="ALT_INIT"/>
    <property type="molecule type" value="Genomic_DNA"/>
</dbReference>
<dbReference type="EMBL" id="AL049487">
    <property type="protein sequence ID" value="CAB39771.1"/>
    <property type="status" value="ALT_INIT"/>
    <property type="molecule type" value="Genomic_DNA"/>
</dbReference>
<dbReference type="EMBL" id="AL161516">
    <property type="protein sequence ID" value="CAB78142.1"/>
    <property type="status" value="ALT_INIT"/>
    <property type="molecule type" value="Genomic_DNA"/>
</dbReference>
<dbReference type="EMBL" id="CP002687">
    <property type="protein sequence ID" value="AEE82853.1"/>
    <property type="molecule type" value="Genomic_DNA"/>
</dbReference>
<dbReference type="PIR" id="T01978">
    <property type="entry name" value="T01978"/>
</dbReference>
<dbReference type="RefSeq" id="NP_192757.2">
    <property type="nucleotide sequence ID" value="NM_117087.2"/>
</dbReference>
<dbReference type="STRING" id="3702.O82622"/>
<dbReference type="iPTMnet" id="O82622"/>
<dbReference type="PaxDb" id="3702-AT4G10190.1"/>
<dbReference type="EnsemblPlants" id="AT4G10190.1">
    <property type="protein sequence ID" value="AT4G10190.1"/>
    <property type="gene ID" value="AT4G10190"/>
</dbReference>
<dbReference type="GeneID" id="826610"/>
<dbReference type="Gramene" id="AT4G10190.1">
    <property type="protein sequence ID" value="AT4G10190.1"/>
    <property type="gene ID" value="AT4G10190"/>
</dbReference>
<dbReference type="KEGG" id="ath:AT4G10190"/>
<dbReference type="Araport" id="AT4G10190"/>
<dbReference type="TAIR" id="AT4G10190"/>
<dbReference type="HOGENOM" id="CLU_034692_1_0_1"/>
<dbReference type="InParanoid" id="O82622"/>
<dbReference type="OMA" id="YKISSNC"/>
<dbReference type="PRO" id="PR:O82622"/>
<dbReference type="Proteomes" id="UP000006548">
    <property type="component" value="Chromosome 4"/>
</dbReference>
<dbReference type="ExpressionAtlas" id="O82622">
    <property type="expression patterns" value="baseline"/>
</dbReference>
<dbReference type="CDD" id="cd22157">
    <property type="entry name" value="F-box_AtFBW1-like"/>
    <property type="match status" value="1"/>
</dbReference>
<dbReference type="Gene3D" id="1.20.1280.50">
    <property type="match status" value="1"/>
</dbReference>
<dbReference type="InterPro" id="IPR006527">
    <property type="entry name" value="F-box-assoc_dom_typ1"/>
</dbReference>
<dbReference type="InterPro" id="IPR017451">
    <property type="entry name" value="F-box-assoc_interact_dom"/>
</dbReference>
<dbReference type="InterPro" id="IPR036047">
    <property type="entry name" value="F-box-like_dom_sf"/>
</dbReference>
<dbReference type="InterPro" id="IPR001810">
    <property type="entry name" value="F-box_dom"/>
</dbReference>
<dbReference type="InterPro" id="IPR050796">
    <property type="entry name" value="SCF_F-box_component"/>
</dbReference>
<dbReference type="NCBIfam" id="TIGR01640">
    <property type="entry name" value="F_box_assoc_1"/>
    <property type="match status" value="1"/>
</dbReference>
<dbReference type="PANTHER" id="PTHR31672">
    <property type="entry name" value="BNACNNG10540D PROTEIN"/>
    <property type="match status" value="1"/>
</dbReference>
<dbReference type="Pfam" id="PF00646">
    <property type="entry name" value="F-box"/>
    <property type="match status" value="1"/>
</dbReference>
<dbReference type="Pfam" id="PF07734">
    <property type="entry name" value="FBA_1"/>
    <property type="match status" value="1"/>
</dbReference>
<dbReference type="SMART" id="SM00256">
    <property type="entry name" value="FBOX"/>
    <property type="match status" value="1"/>
</dbReference>
<dbReference type="SUPFAM" id="SSF81383">
    <property type="entry name" value="F-box domain"/>
    <property type="match status" value="1"/>
</dbReference>
<dbReference type="PROSITE" id="PS50181">
    <property type="entry name" value="FBOX"/>
    <property type="match status" value="1"/>
</dbReference>
<comment type="sequence caution" evidence="2">
    <conflict type="erroneous initiation">
        <sequence resource="EMBL-CDS" id="AAC62811"/>
    </conflict>
    <text>Truncated N-terminus.</text>
</comment>
<comment type="sequence caution" evidence="2">
    <conflict type="erroneous initiation">
        <sequence resource="EMBL-CDS" id="CAB39771"/>
    </conflict>
    <text>Truncated N-terminus.</text>
</comment>
<comment type="sequence caution" evidence="2">
    <conflict type="erroneous initiation">
        <sequence resource="EMBL-CDS" id="CAB78142"/>
    </conflict>
    <text>Truncated N-terminus.</text>
</comment>
<keyword id="KW-1185">Reference proteome</keyword>
<name>FB227_ARATH</name>
<feature type="chain" id="PRO_0000283496" description="Putative F-box protein At4g10190">
    <location>
        <begin position="1"/>
        <end position="367"/>
    </location>
</feature>
<feature type="domain" description="F-box" evidence="1">
    <location>
        <begin position="3"/>
        <end position="53"/>
    </location>
</feature>
<proteinExistence type="predicted"/>